<proteinExistence type="inferred from homology"/>
<feature type="chain" id="PRO_0000062143" description="Large ribosomal subunit protein uL16">
    <location>
        <begin position="1"/>
        <end position="136"/>
    </location>
</feature>
<gene>
    <name evidence="1" type="primary">rplP</name>
    <name type="ordered locus">MHP7448_0187</name>
</gene>
<name>RL16_MESH7</name>
<accession>Q4A8H8</accession>
<protein>
    <recommendedName>
        <fullName evidence="1">Large ribosomal subunit protein uL16</fullName>
    </recommendedName>
    <alternativeName>
        <fullName evidence="2">50S ribosomal protein L16</fullName>
    </alternativeName>
</protein>
<sequence length="136" mass="15185">MLQPKKTKHRKTFRLYHDKRDAHSGNFVAFGDYGLQATGSAWVSAAQIEAARIAITRRMGREGQVIIRVFPHLALTSKPIGVRMGSGKGSVDRWVAVVKRNTILFEVRGVKDEIARDALRLGGHKLPLKWKIVATV</sequence>
<comment type="function">
    <text evidence="1">Binds 23S rRNA and is also seen to make contacts with the A and possibly P site tRNAs.</text>
</comment>
<comment type="subunit">
    <text evidence="1">Part of the 50S ribosomal subunit.</text>
</comment>
<comment type="similarity">
    <text evidence="1">Belongs to the universal ribosomal protein uL16 family.</text>
</comment>
<keyword id="KW-0687">Ribonucleoprotein</keyword>
<keyword id="KW-0689">Ribosomal protein</keyword>
<keyword id="KW-0694">RNA-binding</keyword>
<keyword id="KW-0699">rRNA-binding</keyword>
<keyword id="KW-0820">tRNA-binding</keyword>
<reference key="1">
    <citation type="journal article" date="2005" name="J. Bacteriol.">
        <title>Swine and poultry pathogens: the complete genome sequences of two strains of Mycoplasma hyopneumoniae and a strain of Mycoplasma synoviae.</title>
        <authorList>
            <person name="Vasconcelos A.T.R."/>
            <person name="Ferreira H.B."/>
            <person name="Bizarro C.V."/>
            <person name="Bonatto S.L."/>
            <person name="Carvalho M.O."/>
            <person name="Pinto P.M."/>
            <person name="Almeida D.F."/>
            <person name="Almeida L.G.P."/>
            <person name="Almeida R."/>
            <person name="Alves-Junior L."/>
            <person name="Assuncao E.N."/>
            <person name="Azevedo V.A.C."/>
            <person name="Bogo M.R."/>
            <person name="Brigido M.M."/>
            <person name="Brocchi M."/>
            <person name="Burity H.A."/>
            <person name="Camargo A.A."/>
            <person name="Camargo S.S."/>
            <person name="Carepo M.S."/>
            <person name="Carraro D.M."/>
            <person name="de Mattos Cascardo J.C."/>
            <person name="Castro L.A."/>
            <person name="Cavalcanti G."/>
            <person name="Chemale G."/>
            <person name="Collevatti R.G."/>
            <person name="Cunha C.W."/>
            <person name="Dallagiovanna B."/>
            <person name="Dambros B.P."/>
            <person name="Dellagostin O.A."/>
            <person name="Falcao C."/>
            <person name="Fantinatti-Garboggini F."/>
            <person name="Felipe M.S.S."/>
            <person name="Fiorentin L."/>
            <person name="Franco G.R."/>
            <person name="Freitas N.S.A."/>
            <person name="Frias D."/>
            <person name="Grangeiro T.B."/>
            <person name="Grisard E.C."/>
            <person name="Guimaraes C.T."/>
            <person name="Hungria M."/>
            <person name="Jardim S.N."/>
            <person name="Krieger M.A."/>
            <person name="Laurino J.P."/>
            <person name="Lima L.F.A."/>
            <person name="Lopes M.I."/>
            <person name="Loreto E.L.S."/>
            <person name="Madeira H.M.F."/>
            <person name="Manfio G.P."/>
            <person name="Maranhao A.Q."/>
            <person name="Martinkovics C.T."/>
            <person name="Medeiros S.R.B."/>
            <person name="Moreira M.A.M."/>
            <person name="Neiva M."/>
            <person name="Ramalho-Neto C.E."/>
            <person name="Nicolas M.F."/>
            <person name="Oliveira S.C."/>
            <person name="Paixao R.F.C."/>
            <person name="Pedrosa F.O."/>
            <person name="Pena S.D.J."/>
            <person name="Pereira M."/>
            <person name="Pereira-Ferrari L."/>
            <person name="Piffer I."/>
            <person name="Pinto L.S."/>
            <person name="Potrich D.P."/>
            <person name="Salim A.C.M."/>
            <person name="Santos F.R."/>
            <person name="Schmitt R."/>
            <person name="Schneider M.P.C."/>
            <person name="Schrank A."/>
            <person name="Schrank I.S."/>
            <person name="Schuck A.F."/>
            <person name="Seuanez H.N."/>
            <person name="Silva D.W."/>
            <person name="Silva R."/>
            <person name="Silva S.C."/>
            <person name="Soares C.M.A."/>
            <person name="Souza K.R.L."/>
            <person name="Souza R.C."/>
            <person name="Staats C.C."/>
            <person name="Steffens M.B.R."/>
            <person name="Teixeira S.M.R."/>
            <person name="Urmenyi T.P."/>
            <person name="Vainstein M.H."/>
            <person name="Zuccherato L.W."/>
            <person name="Simpson A.J.G."/>
            <person name="Zaha A."/>
        </authorList>
    </citation>
    <scope>NUCLEOTIDE SEQUENCE [LARGE SCALE GENOMIC DNA]</scope>
    <source>
        <strain>7448</strain>
    </source>
</reference>
<organism>
    <name type="scientific">Mesomycoplasma hyopneumoniae (strain 7448)</name>
    <name type="common">Mycoplasma hyopneumoniae</name>
    <dbReference type="NCBI Taxonomy" id="262722"/>
    <lineage>
        <taxon>Bacteria</taxon>
        <taxon>Bacillati</taxon>
        <taxon>Mycoplasmatota</taxon>
        <taxon>Mycoplasmoidales</taxon>
        <taxon>Metamycoplasmataceae</taxon>
        <taxon>Mesomycoplasma</taxon>
    </lineage>
</organism>
<evidence type="ECO:0000255" key="1">
    <source>
        <dbReference type="HAMAP-Rule" id="MF_01342"/>
    </source>
</evidence>
<evidence type="ECO:0000305" key="2"/>
<dbReference type="EMBL" id="AE017244">
    <property type="protein sequence ID" value="AAZ53561.1"/>
    <property type="molecule type" value="Genomic_DNA"/>
</dbReference>
<dbReference type="RefSeq" id="WP_011206032.1">
    <property type="nucleotide sequence ID" value="NC_007332.1"/>
</dbReference>
<dbReference type="SMR" id="Q4A8H8"/>
<dbReference type="GeneID" id="41334486"/>
<dbReference type="KEGG" id="mhp:MHP7448_0187"/>
<dbReference type="HOGENOM" id="CLU_078858_2_1_14"/>
<dbReference type="Proteomes" id="UP000000553">
    <property type="component" value="Chromosome"/>
</dbReference>
<dbReference type="GO" id="GO:0022625">
    <property type="term" value="C:cytosolic large ribosomal subunit"/>
    <property type="evidence" value="ECO:0007669"/>
    <property type="project" value="TreeGrafter"/>
</dbReference>
<dbReference type="GO" id="GO:0019843">
    <property type="term" value="F:rRNA binding"/>
    <property type="evidence" value="ECO:0007669"/>
    <property type="project" value="UniProtKB-UniRule"/>
</dbReference>
<dbReference type="GO" id="GO:0003735">
    <property type="term" value="F:structural constituent of ribosome"/>
    <property type="evidence" value="ECO:0007669"/>
    <property type="project" value="InterPro"/>
</dbReference>
<dbReference type="GO" id="GO:0000049">
    <property type="term" value="F:tRNA binding"/>
    <property type="evidence" value="ECO:0007669"/>
    <property type="project" value="UniProtKB-KW"/>
</dbReference>
<dbReference type="GO" id="GO:0006412">
    <property type="term" value="P:translation"/>
    <property type="evidence" value="ECO:0007669"/>
    <property type="project" value="UniProtKB-UniRule"/>
</dbReference>
<dbReference type="CDD" id="cd01433">
    <property type="entry name" value="Ribosomal_L16_L10e"/>
    <property type="match status" value="1"/>
</dbReference>
<dbReference type="FunFam" id="3.90.1170.10:FF:000001">
    <property type="entry name" value="50S ribosomal protein L16"/>
    <property type="match status" value="1"/>
</dbReference>
<dbReference type="Gene3D" id="3.90.1170.10">
    <property type="entry name" value="Ribosomal protein L10e/L16"/>
    <property type="match status" value="1"/>
</dbReference>
<dbReference type="HAMAP" id="MF_01342">
    <property type="entry name" value="Ribosomal_uL16"/>
    <property type="match status" value="1"/>
</dbReference>
<dbReference type="InterPro" id="IPR047873">
    <property type="entry name" value="Ribosomal_uL16"/>
</dbReference>
<dbReference type="InterPro" id="IPR000114">
    <property type="entry name" value="Ribosomal_uL16_bact-type"/>
</dbReference>
<dbReference type="InterPro" id="IPR020798">
    <property type="entry name" value="Ribosomal_uL16_CS"/>
</dbReference>
<dbReference type="InterPro" id="IPR016180">
    <property type="entry name" value="Ribosomal_uL16_dom"/>
</dbReference>
<dbReference type="InterPro" id="IPR036920">
    <property type="entry name" value="Ribosomal_uL16_sf"/>
</dbReference>
<dbReference type="NCBIfam" id="TIGR01164">
    <property type="entry name" value="rplP_bact"/>
    <property type="match status" value="1"/>
</dbReference>
<dbReference type="PANTHER" id="PTHR12220">
    <property type="entry name" value="50S/60S RIBOSOMAL PROTEIN L16"/>
    <property type="match status" value="1"/>
</dbReference>
<dbReference type="PANTHER" id="PTHR12220:SF13">
    <property type="entry name" value="LARGE RIBOSOMAL SUBUNIT PROTEIN UL16M"/>
    <property type="match status" value="1"/>
</dbReference>
<dbReference type="Pfam" id="PF00252">
    <property type="entry name" value="Ribosomal_L16"/>
    <property type="match status" value="1"/>
</dbReference>
<dbReference type="PRINTS" id="PR00060">
    <property type="entry name" value="RIBOSOMALL16"/>
</dbReference>
<dbReference type="SUPFAM" id="SSF54686">
    <property type="entry name" value="Ribosomal protein L16p/L10e"/>
    <property type="match status" value="1"/>
</dbReference>
<dbReference type="PROSITE" id="PS00701">
    <property type="entry name" value="RIBOSOMAL_L16_2"/>
    <property type="match status" value="1"/>
</dbReference>